<sequence length="557" mass="59100">MVLSDIEIANSVSMEPISKVADQLGIDKEALCLYGKYKAKINARQLVALKDKPDGKLILVTAISPTPAGEGKTTTSVGLVDALSAIGKKAVIALREPSLGPVFGVKGGAAGGGHAQVVPMEDINLHFTGDFHAIGVANNLLAALIDNHIHHGNSLGIDSRRITWKRVVDMNDRQLRHIVDGLQGKVNGVPREDGYDITVASEIMAILCLSENISDLKARLEKIIIGYNYQGEPVTAKDLKAGGALADLLKDAIHPNLVQTLEHTPALIHGGPFANIAHGCNSVLATKLALKYGDYAVTEAGFGADLGAEKFIDIKCRMSGLRPAAVVLVATIRALKMHGGVQKTDLATENVQAVVDGLPNLDKHLANIQDVYGLPVVVAINKFPLDTDAELQAVYDACNKRGVDVVISDVWANGGAGGRELAEKVVTLAEQDNQFRFVYEEDDSIETKLTKIVTKVYGGKGITLSPAAKRELADLERLGFGNYPICMAKTQYSFSDDAKTLGAPTDFTVTISNLKVSAGAGFIVALTGAIMTMPGLPKVPASETIDIDEEGNITGLF</sequence>
<feature type="chain" id="PRO_0000293066" description="Formate--tetrahydrofolate ligase 2">
    <location>
        <begin position="1"/>
        <end position="557"/>
    </location>
</feature>
<feature type="binding site" evidence="1">
    <location>
        <begin position="66"/>
        <end position="73"/>
    </location>
    <ligand>
        <name>ATP</name>
        <dbReference type="ChEBI" id="CHEBI:30616"/>
    </ligand>
</feature>
<comment type="catalytic activity">
    <reaction evidence="1">
        <text>(6S)-5,6,7,8-tetrahydrofolate + formate + ATP = (6R)-10-formyltetrahydrofolate + ADP + phosphate</text>
        <dbReference type="Rhea" id="RHEA:20221"/>
        <dbReference type="ChEBI" id="CHEBI:15740"/>
        <dbReference type="ChEBI" id="CHEBI:30616"/>
        <dbReference type="ChEBI" id="CHEBI:43474"/>
        <dbReference type="ChEBI" id="CHEBI:57453"/>
        <dbReference type="ChEBI" id="CHEBI:195366"/>
        <dbReference type="ChEBI" id="CHEBI:456216"/>
        <dbReference type="EC" id="6.3.4.3"/>
    </reaction>
</comment>
<comment type="pathway">
    <text evidence="1">One-carbon metabolism; tetrahydrofolate interconversion.</text>
</comment>
<comment type="similarity">
    <text evidence="1">Belongs to the formate--tetrahydrofolate ligase family.</text>
</comment>
<evidence type="ECO:0000255" key="1">
    <source>
        <dbReference type="HAMAP-Rule" id="MF_01543"/>
    </source>
</evidence>
<dbReference type="EC" id="6.3.4.3" evidence="1"/>
<dbReference type="EMBL" id="CP000262">
    <property type="protein sequence ID" value="ABF38816.1"/>
    <property type="molecule type" value="Genomic_DNA"/>
</dbReference>
<dbReference type="SMR" id="Q1J4C0"/>
<dbReference type="KEGG" id="spi:MGAS10750_Spy1866"/>
<dbReference type="HOGENOM" id="CLU_003601_3_3_9"/>
<dbReference type="UniPathway" id="UPA00193"/>
<dbReference type="Proteomes" id="UP000002434">
    <property type="component" value="Chromosome"/>
</dbReference>
<dbReference type="GO" id="GO:0005524">
    <property type="term" value="F:ATP binding"/>
    <property type="evidence" value="ECO:0007669"/>
    <property type="project" value="UniProtKB-UniRule"/>
</dbReference>
<dbReference type="GO" id="GO:0004329">
    <property type="term" value="F:formate-tetrahydrofolate ligase activity"/>
    <property type="evidence" value="ECO:0007669"/>
    <property type="project" value="UniProtKB-UniRule"/>
</dbReference>
<dbReference type="GO" id="GO:0035999">
    <property type="term" value="P:tetrahydrofolate interconversion"/>
    <property type="evidence" value="ECO:0007669"/>
    <property type="project" value="UniProtKB-UniRule"/>
</dbReference>
<dbReference type="CDD" id="cd00477">
    <property type="entry name" value="FTHFS"/>
    <property type="match status" value="1"/>
</dbReference>
<dbReference type="FunFam" id="3.30.1510.10:FF:000001">
    <property type="entry name" value="Formate--tetrahydrofolate ligase"/>
    <property type="match status" value="1"/>
</dbReference>
<dbReference type="FunFam" id="3.10.410.10:FF:000001">
    <property type="entry name" value="Putative formate--tetrahydrofolate ligase"/>
    <property type="match status" value="1"/>
</dbReference>
<dbReference type="Gene3D" id="3.30.1510.10">
    <property type="entry name" value="Domain 2, N(10)-formyltetrahydrofolate synthetase"/>
    <property type="match status" value="1"/>
</dbReference>
<dbReference type="Gene3D" id="3.10.410.10">
    <property type="entry name" value="Formyltetrahydrofolate synthetase, domain 3"/>
    <property type="match status" value="1"/>
</dbReference>
<dbReference type="Gene3D" id="3.40.50.300">
    <property type="entry name" value="P-loop containing nucleotide triphosphate hydrolases"/>
    <property type="match status" value="1"/>
</dbReference>
<dbReference type="HAMAP" id="MF_01543">
    <property type="entry name" value="FTHFS"/>
    <property type="match status" value="1"/>
</dbReference>
<dbReference type="InterPro" id="IPR000559">
    <property type="entry name" value="Formate_THF_ligase"/>
</dbReference>
<dbReference type="InterPro" id="IPR020628">
    <property type="entry name" value="Formate_THF_ligase_CS"/>
</dbReference>
<dbReference type="InterPro" id="IPR027417">
    <property type="entry name" value="P-loop_NTPase"/>
</dbReference>
<dbReference type="NCBIfam" id="NF010030">
    <property type="entry name" value="PRK13505.1"/>
    <property type="match status" value="1"/>
</dbReference>
<dbReference type="Pfam" id="PF01268">
    <property type="entry name" value="FTHFS"/>
    <property type="match status" value="1"/>
</dbReference>
<dbReference type="SUPFAM" id="SSF52540">
    <property type="entry name" value="P-loop containing nucleoside triphosphate hydrolases"/>
    <property type="match status" value="1"/>
</dbReference>
<dbReference type="PROSITE" id="PS00721">
    <property type="entry name" value="FTHFS_1"/>
    <property type="match status" value="1"/>
</dbReference>
<dbReference type="PROSITE" id="PS00722">
    <property type="entry name" value="FTHFS_2"/>
    <property type="match status" value="1"/>
</dbReference>
<organism>
    <name type="scientific">Streptococcus pyogenes serotype M4 (strain MGAS10750)</name>
    <dbReference type="NCBI Taxonomy" id="370554"/>
    <lineage>
        <taxon>Bacteria</taxon>
        <taxon>Bacillati</taxon>
        <taxon>Bacillota</taxon>
        <taxon>Bacilli</taxon>
        <taxon>Lactobacillales</taxon>
        <taxon>Streptococcaceae</taxon>
        <taxon>Streptococcus</taxon>
    </lineage>
</organism>
<reference key="1">
    <citation type="journal article" date="2006" name="Proc. Natl. Acad. Sci. U.S.A.">
        <title>Molecular genetic anatomy of inter- and intraserotype variation in the human bacterial pathogen group A Streptococcus.</title>
        <authorList>
            <person name="Beres S.B."/>
            <person name="Richter E.W."/>
            <person name="Nagiec M.J."/>
            <person name="Sumby P."/>
            <person name="Porcella S.F."/>
            <person name="DeLeo F.R."/>
            <person name="Musser J.M."/>
        </authorList>
    </citation>
    <scope>NUCLEOTIDE SEQUENCE [LARGE SCALE GENOMIC DNA]</scope>
    <source>
        <strain>MGAS10750</strain>
    </source>
</reference>
<proteinExistence type="inferred from homology"/>
<gene>
    <name evidence="1" type="primary">fhs2</name>
    <name type="ordered locus">MGAS10750_Spy1866</name>
</gene>
<protein>
    <recommendedName>
        <fullName evidence="1">Formate--tetrahydrofolate ligase 2</fullName>
        <ecNumber evidence="1">6.3.4.3</ecNumber>
    </recommendedName>
    <alternativeName>
        <fullName evidence="1">Formyltetrahydrofolate synthetase 2</fullName>
        <shortName evidence="1">FHS 2</shortName>
        <shortName evidence="1">FTHFS 2</shortName>
    </alternativeName>
</protein>
<name>FTHS2_STRPF</name>
<accession>Q1J4C0</accession>
<keyword id="KW-0067">ATP-binding</keyword>
<keyword id="KW-0436">Ligase</keyword>
<keyword id="KW-0547">Nucleotide-binding</keyword>
<keyword id="KW-0554">One-carbon metabolism</keyword>